<dbReference type="EC" id="2.7.1.130" evidence="1"/>
<dbReference type="EMBL" id="AE008918">
    <property type="protein sequence ID" value="AAL54270.1"/>
    <property type="molecule type" value="Genomic_DNA"/>
</dbReference>
<dbReference type="PIR" id="AC3638">
    <property type="entry name" value="AC3638"/>
</dbReference>
<dbReference type="RefSeq" id="WP_002966366.1">
    <property type="nucleotide sequence ID" value="NZ_GG703779.1"/>
</dbReference>
<dbReference type="SMR" id="P65325"/>
<dbReference type="GeneID" id="97535597"/>
<dbReference type="KEGG" id="bme:BMEII1028"/>
<dbReference type="KEGG" id="bmel:DK63_2228"/>
<dbReference type="PATRIC" id="fig|224914.52.peg.2334"/>
<dbReference type="eggNOG" id="COG1663">
    <property type="taxonomic scope" value="Bacteria"/>
</dbReference>
<dbReference type="PhylomeDB" id="P65325"/>
<dbReference type="UniPathway" id="UPA00359">
    <property type="reaction ID" value="UER00482"/>
</dbReference>
<dbReference type="Proteomes" id="UP000000419">
    <property type="component" value="Chromosome II"/>
</dbReference>
<dbReference type="GO" id="GO:0005886">
    <property type="term" value="C:plasma membrane"/>
    <property type="evidence" value="ECO:0007669"/>
    <property type="project" value="TreeGrafter"/>
</dbReference>
<dbReference type="GO" id="GO:0005524">
    <property type="term" value="F:ATP binding"/>
    <property type="evidence" value="ECO:0007669"/>
    <property type="project" value="UniProtKB-UniRule"/>
</dbReference>
<dbReference type="GO" id="GO:0009029">
    <property type="term" value="F:tetraacyldisaccharide 4'-kinase activity"/>
    <property type="evidence" value="ECO:0007669"/>
    <property type="project" value="UniProtKB-UniRule"/>
</dbReference>
<dbReference type="GO" id="GO:0009245">
    <property type="term" value="P:lipid A biosynthetic process"/>
    <property type="evidence" value="ECO:0007669"/>
    <property type="project" value="UniProtKB-UniRule"/>
</dbReference>
<dbReference type="GO" id="GO:0009244">
    <property type="term" value="P:lipopolysaccharide core region biosynthetic process"/>
    <property type="evidence" value="ECO:0007669"/>
    <property type="project" value="TreeGrafter"/>
</dbReference>
<dbReference type="HAMAP" id="MF_00409">
    <property type="entry name" value="LpxK"/>
    <property type="match status" value="1"/>
</dbReference>
<dbReference type="InterPro" id="IPR003758">
    <property type="entry name" value="LpxK"/>
</dbReference>
<dbReference type="InterPro" id="IPR027417">
    <property type="entry name" value="P-loop_NTPase"/>
</dbReference>
<dbReference type="NCBIfam" id="TIGR00682">
    <property type="entry name" value="lpxK"/>
    <property type="match status" value="1"/>
</dbReference>
<dbReference type="PANTHER" id="PTHR42724">
    <property type="entry name" value="TETRAACYLDISACCHARIDE 4'-KINASE"/>
    <property type="match status" value="1"/>
</dbReference>
<dbReference type="PANTHER" id="PTHR42724:SF1">
    <property type="entry name" value="TETRAACYLDISACCHARIDE 4'-KINASE, MITOCHONDRIAL-RELATED"/>
    <property type="match status" value="1"/>
</dbReference>
<dbReference type="Pfam" id="PF02606">
    <property type="entry name" value="LpxK"/>
    <property type="match status" value="1"/>
</dbReference>
<dbReference type="SUPFAM" id="SSF52540">
    <property type="entry name" value="P-loop containing nucleoside triphosphate hydrolases"/>
    <property type="match status" value="1"/>
</dbReference>
<gene>
    <name evidence="1" type="primary">lpxK</name>
    <name type="ordered locus">BMEII1028</name>
</gene>
<sequence>MASEAPPFWWDEPDWRALALAPAAWIYGRVSGRRLIRAVPPRVSLPVLCVGNFTVGGAGKTPTAIAFARGAIARGMKPGIVSRGYGGNYSGLHLVDPGHDGARHVGDEPLLLARHAAVALSPDRVKAAEYLKSLGCDFIIMDDGFQSARLHADFSLLVVDASRGIGNGRVIPAGPLRAPLTDQMRKTDALLCIGKGNGADFVIRQAARAGRPIYHAQLRPSSSATVAGRRWLAFAGIGNPDKFYESVRQAGGEVVETHSFADHYSFEPDDIRGLVDMARRQGLGLITTAKDHVRLATMPGVPPEFLSKLAVLDVDLEFDRTDALDHILDTVVERFKSRLHG</sequence>
<organism>
    <name type="scientific">Brucella melitensis biotype 1 (strain ATCC 23456 / CCUG 17765 / NCTC 10094 / 16M)</name>
    <dbReference type="NCBI Taxonomy" id="224914"/>
    <lineage>
        <taxon>Bacteria</taxon>
        <taxon>Pseudomonadati</taxon>
        <taxon>Pseudomonadota</taxon>
        <taxon>Alphaproteobacteria</taxon>
        <taxon>Hyphomicrobiales</taxon>
        <taxon>Brucellaceae</taxon>
        <taxon>Brucella/Ochrobactrum group</taxon>
        <taxon>Brucella</taxon>
    </lineage>
</organism>
<keyword id="KW-0067">ATP-binding</keyword>
<keyword id="KW-0418">Kinase</keyword>
<keyword id="KW-0441">Lipid A biosynthesis</keyword>
<keyword id="KW-0444">Lipid biosynthesis</keyword>
<keyword id="KW-0443">Lipid metabolism</keyword>
<keyword id="KW-0547">Nucleotide-binding</keyword>
<keyword id="KW-0808">Transferase</keyword>
<accession>P65325</accession>
<accession>Q8YB72</accession>
<protein>
    <recommendedName>
        <fullName evidence="1">Tetraacyldisaccharide 4'-kinase</fullName>
        <ecNumber evidence="1">2.7.1.130</ecNumber>
    </recommendedName>
    <alternativeName>
        <fullName evidence="1">Lipid A 4'-kinase</fullName>
    </alternativeName>
</protein>
<proteinExistence type="inferred from homology"/>
<evidence type="ECO:0000255" key="1">
    <source>
        <dbReference type="HAMAP-Rule" id="MF_00409"/>
    </source>
</evidence>
<feature type="chain" id="PRO_0000190914" description="Tetraacyldisaccharide 4'-kinase">
    <location>
        <begin position="1"/>
        <end position="341"/>
    </location>
</feature>
<feature type="binding site" evidence="1">
    <location>
        <begin position="54"/>
        <end position="61"/>
    </location>
    <ligand>
        <name>ATP</name>
        <dbReference type="ChEBI" id="CHEBI:30616"/>
    </ligand>
</feature>
<name>LPXK_BRUME</name>
<comment type="function">
    <text evidence="1">Transfers the gamma-phosphate of ATP to the 4'-position of a tetraacyldisaccharide 1-phosphate intermediate (termed DS-1-P) to form tetraacyldisaccharide 1,4'-bis-phosphate (lipid IVA).</text>
</comment>
<comment type="catalytic activity">
    <reaction evidence="1">
        <text>a lipid A disaccharide + ATP = a lipid IVA + ADP + H(+)</text>
        <dbReference type="Rhea" id="RHEA:67840"/>
        <dbReference type="ChEBI" id="CHEBI:15378"/>
        <dbReference type="ChEBI" id="CHEBI:30616"/>
        <dbReference type="ChEBI" id="CHEBI:176343"/>
        <dbReference type="ChEBI" id="CHEBI:176425"/>
        <dbReference type="ChEBI" id="CHEBI:456216"/>
        <dbReference type="EC" id="2.7.1.130"/>
    </reaction>
</comment>
<comment type="pathway">
    <text evidence="1">Glycolipid biosynthesis; lipid IV(A) biosynthesis; lipid IV(A) from (3R)-3-hydroxytetradecanoyl-[acyl-carrier-protein] and UDP-N-acetyl-alpha-D-glucosamine: step 6/6.</text>
</comment>
<comment type="similarity">
    <text evidence="1">Belongs to the LpxK family.</text>
</comment>
<reference key="1">
    <citation type="journal article" date="2002" name="Proc. Natl. Acad. Sci. U.S.A.">
        <title>The genome sequence of the facultative intracellular pathogen Brucella melitensis.</title>
        <authorList>
            <person name="DelVecchio V.G."/>
            <person name="Kapatral V."/>
            <person name="Redkar R.J."/>
            <person name="Patra G."/>
            <person name="Mujer C."/>
            <person name="Los T."/>
            <person name="Ivanova N."/>
            <person name="Anderson I."/>
            <person name="Bhattacharyya A."/>
            <person name="Lykidis A."/>
            <person name="Reznik G."/>
            <person name="Jablonski L."/>
            <person name="Larsen N."/>
            <person name="D'Souza M."/>
            <person name="Bernal A."/>
            <person name="Mazur M."/>
            <person name="Goltsman E."/>
            <person name="Selkov E."/>
            <person name="Elzer P.H."/>
            <person name="Hagius S."/>
            <person name="O'Callaghan D."/>
            <person name="Letesson J.-J."/>
            <person name="Haselkorn R."/>
            <person name="Kyrpides N.C."/>
            <person name="Overbeek R."/>
        </authorList>
    </citation>
    <scope>NUCLEOTIDE SEQUENCE [LARGE SCALE GENOMIC DNA]</scope>
    <source>
        <strain>ATCC 23456 / CCUG 17765 / NCTC 10094 / 16M</strain>
    </source>
</reference>